<accession>B0R4Y3</accession>
<organism>
    <name type="scientific">Halobacterium salinarum (strain ATCC 29341 / DSM 671 / R1)</name>
    <dbReference type="NCBI Taxonomy" id="478009"/>
    <lineage>
        <taxon>Archaea</taxon>
        <taxon>Methanobacteriati</taxon>
        <taxon>Methanobacteriota</taxon>
        <taxon>Stenosarchaea group</taxon>
        <taxon>Halobacteria</taxon>
        <taxon>Halobacteriales</taxon>
        <taxon>Halobacteriaceae</taxon>
        <taxon>Halobacterium</taxon>
        <taxon>Halobacterium salinarum NRC-34001</taxon>
    </lineage>
</organism>
<comment type="similarity">
    <text evidence="1">Belongs to the eukaryotic ribosomal protein eL18 family.</text>
</comment>
<evidence type="ECO:0000255" key="1">
    <source>
        <dbReference type="HAMAP-Rule" id="MF_00329"/>
    </source>
</evidence>
<evidence type="ECO:0000305" key="2"/>
<reference key="1">
    <citation type="journal article" date="2008" name="Genomics">
        <title>Evolution in the laboratory: the genome of Halobacterium salinarum strain R1 compared to that of strain NRC-1.</title>
        <authorList>
            <person name="Pfeiffer F."/>
            <person name="Schuster S.C."/>
            <person name="Broicher A."/>
            <person name="Falb M."/>
            <person name="Palm P."/>
            <person name="Rodewald K."/>
            <person name="Ruepp A."/>
            <person name="Soppa J."/>
            <person name="Tittor J."/>
            <person name="Oesterhelt D."/>
        </authorList>
    </citation>
    <scope>NUCLEOTIDE SEQUENCE [LARGE SCALE GENOMIC DNA]</scope>
    <source>
        <strain>ATCC 29341 / DSM 671 / R1</strain>
    </source>
</reference>
<sequence>MSKTSPRLSSLIAELKSVARDSGADVWHDVADRLEKPRSTHAEVNLSRIERYASEDETVIVPGKVLGSGALRKSVTVAAVDFSSSAATKIEHADGEAVHLEQAVEQNPDGTDVRVIR</sequence>
<keyword id="KW-0687">Ribonucleoprotein</keyword>
<keyword id="KW-0689">Ribosomal protein</keyword>
<feature type="chain" id="PRO_1000116104" description="Large ribosomal subunit protein eL18">
    <location>
        <begin position="1"/>
        <end position="117"/>
    </location>
</feature>
<dbReference type="EMBL" id="AM774415">
    <property type="protein sequence ID" value="CAP13798.1"/>
    <property type="molecule type" value="Genomic_DNA"/>
</dbReference>
<dbReference type="RefSeq" id="WP_010902816.1">
    <property type="nucleotide sequence ID" value="NC_010364.1"/>
</dbReference>
<dbReference type="SMR" id="B0R4Y3"/>
<dbReference type="EnsemblBacteria" id="CAP13798">
    <property type="protein sequence ID" value="CAP13798"/>
    <property type="gene ID" value="OE_2632F"/>
</dbReference>
<dbReference type="KEGG" id="hsl:OE_2632F"/>
<dbReference type="HOGENOM" id="CLU_146465_0_0_2"/>
<dbReference type="PhylomeDB" id="B0R4Y3"/>
<dbReference type="Proteomes" id="UP000001321">
    <property type="component" value="Chromosome"/>
</dbReference>
<dbReference type="GO" id="GO:0022625">
    <property type="term" value="C:cytosolic large ribosomal subunit"/>
    <property type="evidence" value="ECO:0007669"/>
    <property type="project" value="TreeGrafter"/>
</dbReference>
<dbReference type="GO" id="GO:0003723">
    <property type="term" value="F:RNA binding"/>
    <property type="evidence" value="ECO:0007669"/>
    <property type="project" value="TreeGrafter"/>
</dbReference>
<dbReference type="GO" id="GO:0003735">
    <property type="term" value="F:structural constituent of ribosome"/>
    <property type="evidence" value="ECO:0007669"/>
    <property type="project" value="InterPro"/>
</dbReference>
<dbReference type="GO" id="GO:0006412">
    <property type="term" value="P:translation"/>
    <property type="evidence" value="ECO:0007669"/>
    <property type="project" value="UniProtKB-UniRule"/>
</dbReference>
<dbReference type="FunFam" id="3.100.10.10:FF:000013">
    <property type="entry name" value="50S ribosomal protein L18e"/>
    <property type="match status" value="1"/>
</dbReference>
<dbReference type="Gene3D" id="3.100.10.10">
    <property type="match status" value="1"/>
</dbReference>
<dbReference type="HAMAP" id="MF_00329">
    <property type="entry name" value="Ribosomal_eL18"/>
    <property type="match status" value="1"/>
</dbReference>
<dbReference type="InterPro" id="IPR000039">
    <property type="entry name" value="Ribosomal_eL18"/>
</dbReference>
<dbReference type="InterPro" id="IPR021132">
    <property type="entry name" value="Ribosomal_eL18/eL18-A/B/_CS"/>
</dbReference>
<dbReference type="InterPro" id="IPR022947">
    <property type="entry name" value="Ribosomal_eL18_arc"/>
</dbReference>
<dbReference type="InterPro" id="IPR021131">
    <property type="entry name" value="Ribosomal_uL15/eL18"/>
</dbReference>
<dbReference type="InterPro" id="IPR036227">
    <property type="entry name" value="Ribosomal_uL15/eL18_sf"/>
</dbReference>
<dbReference type="NCBIfam" id="NF003079">
    <property type="entry name" value="PRK04005.1"/>
    <property type="match status" value="1"/>
</dbReference>
<dbReference type="PANTHER" id="PTHR10934">
    <property type="entry name" value="60S RIBOSOMAL PROTEIN L18"/>
    <property type="match status" value="1"/>
</dbReference>
<dbReference type="PANTHER" id="PTHR10934:SF2">
    <property type="entry name" value="LARGE RIBOSOMAL SUBUNIT PROTEIN EL18"/>
    <property type="match status" value="1"/>
</dbReference>
<dbReference type="Pfam" id="PF17135">
    <property type="entry name" value="Ribosomal_L18"/>
    <property type="match status" value="1"/>
</dbReference>
<dbReference type="SUPFAM" id="SSF52080">
    <property type="entry name" value="Ribosomal proteins L15p and L18e"/>
    <property type="match status" value="1"/>
</dbReference>
<dbReference type="PROSITE" id="PS01106">
    <property type="entry name" value="RIBOSOMAL_L18E"/>
    <property type="match status" value="1"/>
</dbReference>
<protein>
    <recommendedName>
        <fullName evidence="1">Large ribosomal subunit protein eL18</fullName>
    </recommendedName>
    <alternativeName>
        <fullName evidence="2">50S ribosomal protein L18e</fullName>
    </alternativeName>
</protein>
<gene>
    <name evidence="1" type="primary">rpl18e</name>
    <name type="ordered locus">OE_2632F</name>
</gene>
<proteinExistence type="inferred from homology"/>
<name>RL18E_HALS3</name>